<keyword id="KW-0325">Glycoprotein</keyword>
<keyword id="KW-0378">Hydrolase</keyword>
<keyword id="KW-0442">Lipid degradation</keyword>
<keyword id="KW-0443">Lipid metabolism</keyword>
<keyword id="KW-1185">Reference proteome</keyword>
<keyword id="KW-0964">Secreted</keyword>
<keyword id="KW-0732">Signal</keyword>
<protein>
    <recommendedName>
        <fullName>GDSL esterase/lipase At5g37690</fullName>
        <ecNumber>3.1.1.-</ecNumber>
    </recommendedName>
    <alternativeName>
        <fullName>Extracellular lipase At5g37690</fullName>
    </alternativeName>
</protein>
<gene>
    <name type="ordered locus">At5g37690</name>
    <name type="ORF">K12B20.17</name>
</gene>
<sequence>MMILRLALAIVISTYATAQPASTSSLVTYIFGDSLTEVGNNNFLQYSLARADFPYYGVDFSGGKATGRFTNGRTIGDIISTKLGILSPPPYLSLSQNDDAFLSGINYASGGAGILNETGIYFIQRLTFNDQINCFKKTKEVIRAKIGDGAANKHVNDAMYFIGLGSNDYVNNFLQPFMADGQQYTHDEFVELLTSTLHNQLTTIYKLGARKVIFHGLGPLGCIPSQRVKSKTRMCLNRVNEWVLEFNSRTKKLLIDLNKRLPGAKFSFADTYPAVLDLINNPTHYGFKIANTSCCNVDTSVGGLCLPNSKMCKNRQDFVFWDAFHPSDSANQILADHLFSSLLSSSSPSPAPKPRQ</sequence>
<evidence type="ECO:0000250" key="1"/>
<evidence type="ECO:0000255" key="2"/>
<evidence type="ECO:0000305" key="3"/>
<organism>
    <name type="scientific">Arabidopsis thaliana</name>
    <name type="common">Mouse-ear cress</name>
    <dbReference type="NCBI Taxonomy" id="3702"/>
    <lineage>
        <taxon>Eukaryota</taxon>
        <taxon>Viridiplantae</taxon>
        <taxon>Streptophyta</taxon>
        <taxon>Embryophyta</taxon>
        <taxon>Tracheophyta</taxon>
        <taxon>Spermatophyta</taxon>
        <taxon>Magnoliopsida</taxon>
        <taxon>eudicotyledons</taxon>
        <taxon>Gunneridae</taxon>
        <taxon>Pentapetalae</taxon>
        <taxon>rosids</taxon>
        <taxon>malvids</taxon>
        <taxon>Brassicales</taxon>
        <taxon>Brassicaceae</taxon>
        <taxon>Camelineae</taxon>
        <taxon>Arabidopsis</taxon>
    </lineage>
</organism>
<feature type="signal peptide" evidence="2">
    <location>
        <begin position="1"/>
        <end position="18"/>
    </location>
</feature>
<feature type="chain" id="PRO_0000367420" description="GDSL esterase/lipase At5g37690">
    <location>
        <begin position="19"/>
        <end position="356"/>
    </location>
</feature>
<feature type="active site" description="Nucleophile" evidence="1">
    <location>
        <position position="34"/>
    </location>
</feature>
<feature type="active site" evidence="1">
    <location>
        <position position="322"/>
    </location>
</feature>
<feature type="active site" evidence="1">
    <location>
        <position position="325"/>
    </location>
</feature>
<feature type="glycosylation site" description="N-linked (GlcNAc...) asparagine" evidence="2">
    <location>
        <position position="116"/>
    </location>
</feature>
<feature type="glycosylation site" description="N-linked (GlcNAc...) asparagine" evidence="2">
    <location>
        <position position="291"/>
    </location>
</feature>
<feature type="sequence conflict" description="In Ref. 3; AAM61634." evidence="3" ref="3">
    <original>T</original>
    <variation>A</variation>
    <location>
        <position position="14"/>
    </location>
</feature>
<feature type="sequence conflict" description="In Ref. 3; AAM61634." evidence="3" ref="3">
    <original>V</original>
    <variation>I</variation>
    <location>
        <position position="155"/>
    </location>
</feature>
<feature type="sequence conflict" description="In Ref. 3; AAM61634." evidence="3" ref="3">
    <location>
        <position position="356"/>
    </location>
</feature>
<dbReference type="EC" id="3.1.1.-"/>
<dbReference type="EMBL" id="AB018107">
    <property type="protein sequence ID" value="BAB08315.1"/>
    <property type="molecule type" value="Genomic_DNA"/>
</dbReference>
<dbReference type="EMBL" id="CP002688">
    <property type="protein sequence ID" value="AED94220.1"/>
    <property type="molecule type" value="Genomic_DNA"/>
</dbReference>
<dbReference type="EMBL" id="AY085078">
    <property type="protein sequence ID" value="AAM61634.1"/>
    <property type="molecule type" value="mRNA"/>
</dbReference>
<dbReference type="RefSeq" id="NP_198585.2">
    <property type="nucleotide sequence ID" value="NM_123128.3"/>
</dbReference>
<dbReference type="SMR" id="Q9FHQ1"/>
<dbReference type="FunCoup" id="Q9FHQ1">
    <property type="interactions" value="106"/>
</dbReference>
<dbReference type="STRING" id="3702.Q9FHQ1"/>
<dbReference type="GlyGen" id="Q9FHQ1">
    <property type="glycosylation" value="2 sites"/>
</dbReference>
<dbReference type="PaxDb" id="3702-AT5G37690.1"/>
<dbReference type="ProteomicsDB" id="221990"/>
<dbReference type="DNASU" id="833748"/>
<dbReference type="EnsemblPlants" id="AT5G37690.1">
    <property type="protein sequence ID" value="AT5G37690.1"/>
    <property type="gene ID" value="AT5G37690"/>
</dbReference>
<dbReference type="GeneID" id="833748"/>
<dbReference type="Gramene" id="AT5G37690.1">
    <property type="protein sequence ID" value="AT5G37690.1"/>
    <property type="gene ID" value="AT5G37690"/>
</dbReference>
<dbReference type="KEGG" id="ath:AT5G37690"/>
<dbReference type="Araport" id="AT5G37690"/>
<dbReference type="TAIR" id="AT5G37690"/>
<dbReference type="eggNOG" id="ENOG502QW3W">
    <property type="taxonomic scope" value="Eukaryota"/>
</dbReference>
<dbReference type="HOGENOM" id="CLU_015101_0_0_1"/>
<dbReference type="InParanoid" id="Q9FHQ1"/>
<dbReference type="OMA" id="RKMIFHG"/>
<dbReference type="PhylomeDB" id="Q9FHQ1"/>
<dbReference type="BioCyc" id="ARA:AT5G37690-MONOMER"/>
<dbReference type="PRO" id="PR:Q9FHQ1"/>
<dbReference type="Proteomes" id="UP000006548">
    <property type="component" value="Chromosome 5"/>
</dbReference>
<dbReference type="ExpressionAtlas" id="Q9FHQ1">
    <property type="expression patterns" value="baseline and differential"/>
</dbReference>
<dbReference type="GO" id="GO:0005576">
    <property type="term" value="C:extracellular region"/>
    <property type="evidence" value="ECO:0007669"/>
    <property type="project" value="UniProtKB-SubCell"/>
</dbReference>
<dbReference type="GO" id="GO:0016788">
    <property type="term" value="F:hydrolase activity, acting on ester bonds"/>
    <property type="evidence" value="ECO:0007669"/>
    <property type="project" value="InterPro"/>
</dbReference>
<dbReference type="GO" id="GO:0016042">
    <property type="term" value="P:lipid catabolic process"/>
    <property type="evidence" value="ECO:0007669"/>
    <property type="project" value="UniProtKB-KW"/>
</dbReference>
<dbReference type="CDD" id="cd01837">
    <property type="entry name" value="SGNH_plant_lipase_like"/>
    <property type="match status" value="1"/>
</dbReference>
<dbReference type="Gene3D" id="3.40.50.1110">
    <property type="entry name" value="SGNH hydrolase"/>
    <property type="match status" value="1"/>
</dbReference>
<dbReference type="InterPro" id="IPR001087">
    <property type="entry name" value="GDSL"/>
</dbReference>
<dbReference type="InterPro" id="IPR051238">
    <property type="entry name" value="GDSL_esterase/lipase"/>
</dbReference>
<dbReference type="InterPro" id="IPR036514">
    <property type="entry name" value="SGNH_hydro_sf"/>
</dbReference>
<dbReference type="InterPro" id="IPR035669">
    <property type="entry name" value="SGNH_plant_lipase-like"/>
</dbReference>
<dbReference type="PANTHER" id="PTHR45650">
    <property type="entry name" value="GDSL-LIKE LIPASE/ACYLHYDROLASE-RELATED"/>
    <property type="match status" value="1"/>
</dbReference>
<dbReference type="PANTHER" id="PTHR45650:SF16">
    <property type="entry name" value="OS02G0732800 PROTEIN"/>
    <property type="match status" value="1"/>
</dbReference>
<dbReference type="Pfam" id="PF00657">
    <property type="entry name" value="Lipase_GDSL"/>
    <property type="match status" value="1"/>
</dbReference>
<dbReference type="SUPFAM" id="SSF52266">
    <property type="entry name" value="SGNH hydrolase"/>
    <property type="match status" value="1"/>
</dbReference>
<name>GDL80_ARATH</name>
<proteinExistence type="evidence at transcript level"/>
<reference key="1">
    <citation type="journal article" date="1999" name="DNA Res.">
        <title>Structural analysis of Arabidopsis thaliana chromosome 5. IX. Sequence features of the regions of 1,011,550 bp covered by seventeen P1 and TAC clones.</title>
        <authorList>
            <person name="Kaneko T."/>
            <person name="Katoh T."/>
            <person name="Sato S."/>
            <person name="Nakamura Y."/>
            <person name="Asamizu E."/>
            <person name="Kotani H."/>
            <person name="Miyajima N."/>
            <person name="Tabata S."/>
        </authorList>
    </citation>
    <scope>NUCLEOTIDE SEQUENCE [LARGE SCALE GENOMIC DNA]</scope>
    <source>
        <strain>cv. Columbia</strain>
    </source>
</reference>
<reference key="2">
    <citation type="journal article" date="2017" name="Plant J.">
        <title>Araport11: a complete reannotation of the Arabidopsis thaliana reference genome.</title>
        <authorList>
            <person name="Cheng C.Y."/>
            <person name="Krishnakumar V."/>
            <person name="Chan A.P."/>
            <person name="Thibaud-Nissen F."/>
            <person name="Schobel S."/>
            <person name="Town C.D."/>
        </authorList>
    </citation>
    <scope>GENOME REANNOTATION</scope>
    <source>
        <strain>cv. Columbia</strain>
    </source>
</reference>
<reference key="3">
    <citation type="submission" date="2002-03" db="EMBL/GenBank/DDBJ databases">
        <title>Full-length cDNA from Arabidopsis thaliana.</title>
        <authorList>
            <person name="Brover V.V."/>
            <person name="Troukhan M.E."/>
            <person name="Alexandrov N.A."/>
            <person name="Lu Y.-P."/>
            <person name="Flavell R.B."/>
            <person name="Feldmann K.A."/>
        </authorList>
    </citation>
    <scope>NUCLEOTIDE SEQUENCE [LARGE SCALE MRNA]</scope>
</reference>
<reference key="4">
    <citation type="journal article" date="2004" name="Prog. Lipid Res.">
        <title>GDSL family of serine esterases/lipases.</title>
        <authorList>
            <person name="Akoh C.C."/>
            <person name="Lee G.-C."/>
            <person name="Liaw Y.-C."/>
            <person name="Huang T.-H."/>
            <person name="Shaw J.-F."/>
        </authorList>
    </citation>
    <scope>REVIEW</scope>
</reference>
<reference key="5">
    <citation type="journal article" date="2008" name="Pak. J. Biol. Sci.">
        <title>Sequence analysis of GDSL lipase gene family in Arabidopsis thaliana.</title>
        <authorList>
            <person name="Ling H."/>
        </authorList>
    </citation>
    <scope>GENE FAMILY</scope>
</reference>
<accession>Q9FHQ1</accession>
<accession>Q8LF30</accession>
<comment type="subcellular location">
    <subcellularLocation>
        <location evidence="3">Secreted</location>
    </subcellularLocation>
</comment>
<comment type="similarity">
    <text evidence="3">Belongs to the 'GDSL' lipolytic enzyme family.</text>
</comment>